<keyword id="KW-0131">Cell cycle</keyword>
<keyword id="KW-0227">DNA damage</keyword>
<keyword id="KW-0234">DNA repair</keyword>
<keyword id="KW-0238">DNA-binding</keyword>
<keyword id="KW-0539">Nucleus</keyword>
<keyword id="KW-1185">Reference proteome</keyword>
<gene>
    <name type="primary">MEC3</name>
    <name type="ordered locus">AGR289C</name>
</gene>
<protein>
    <recommendedName>
        <fullName>DNA damage checkpoint control protein MEC3</fullName>
    </recommendedName>
</protein>
<comment type="function">
    <text evidence="1">Component of the checkpoint clamp complex involved in the surveillance mechanism that allows the DNA repair pathways to act to restore the integrity of the DNA prior to DNA synthesis or separation of the replicated chromosomes.</text>
</comment>
<comment type="subunit">
    <text evidence="1">Component of the checkpoint clamp complex composed of DDC1, MEC3 and RAD17.</text>
</comment>
<comment type="subcellular location">
    <subcellularLocation>
        <location evidence="2">Nucleus</location>
    </subcellularLocation>
</comment>
<comment type="similarity">
    <text evidence="2">Belongs to the MEC3 family.</text>
</comment>
<accession>Q74ZB0</accession>
<reference key="1">
    <citation type="journal article" date="2004" name="Science">
        <title>The Ashbya gossypii genome as a tool for mapping the ancient Saccharomyces cerevisiae genome.</title>
        <authorList>
            <person name="Dietrich F.S."/>
            <person name="Voegeli S."/>
            <person name="Brachat S."/>
            <person name="Lerch A."/>
            <person name="Gates K."/>
            <person name="Steiner S."/>
            <person name="Mohr C."/>
            <person name="Poehlmann R."/>
            <person name="Luedi P."/>
            <person name="Choi S."/>
            <person name="Wing R.A."/>
            <person name="Flavier A."/>
            <person name="Gaffney T.D."/>
            <person name="Philippsen P."/>
        </authorList>
    </citation>
    <scope>NUCLEOTIDE SEQUENCE [LARGE SCALE GENOMIC DNA]</scope>
    <source>
        <strain>ATCC 10895 / CBS 109.51 / FGSC 9923 / NRRL Y-1056</strain>
    </source>
</reference>
<reference key="2">
    <citation type="journal article" date="2013" name="G3 (Bethesda)">
        <title>Genomes of Ashbya fungi isolated from insects reveal four mating-type loci, numerous translocations, lack of transposons, and distinct gene duplications.</title>
        <authorList>
            <person name="Dietrich F.S."/>
            <person name="Voegeli S."/>
            <person name="Kuo S."/>
            <person name="Philippsen P."/>
        </authorList>
    </citation>
    <scope>GENOME REANNOTATION</scope>
    <scope>SEQUENCE REVISION TO 265; 269 AND 281-283</scope>
    <source>
        <strain>ATCC 10895 / CBS 109.51 / FGSC 9923 / NRRL Y-1056</strain>
    </source>
</reference>
<evidence type="ECO:0000250" key="1"/>
<evidence type="ECO:0000305" key="2"/>
<name>MEC3_EREGS</name>
<organism>
    <name type="scientific">Eremothecium gossypii (strain ATCC 10895 / CBS 109.51 / FGSC 9923 / NRRL Y-1056)</name>
    <name type="common">Yeast</name>
    <name type="synonym">Ashbya gossypii</name>
    <dbReference type="NCBI Taxonomy" id="284811"/>
    <lineage>
        <taxon>Eukaryota</taxon>
        <taxon>Fungi</taxon>
        <taxon>Dikarya</taxon>
        <taxon>Ascomycota</taxon>
        <taxon>Saccharomycotina</taxon>
        <taxon>Saccharomycetes</taxon>
        <taxon>Saccharomycetales</taxon>
        <taxon>Saccharomycetaceae</taxon>
        <taxon>Eremothecium</taxon>
    </lineage>
</organism>
<feature type="chain" id="PRO_0000239639" description="DNA damage checkpoint control protein MEC3">
    <location>
        <begin position="1"/>
        <end position="386"/>
    </location>
</feature>
<dbReference type="EMBL" id="AE016820">
    <property type="protein sequence ID" value="AAS54779.2"/>
    <property type="molecule type" value="Genomic_DNA"/>
</dbReference>
<dbReference type="RefSeq" id="NP_986955.2">
    <property type="nucleotide sequence ID" value="NM_212017.2"/>
</dbReference>
<dbReference type="SMR" id="Q74ZB0"/>
<dbReference type="FunCoup" id="Q74ZB0">
    <property type="interactions" value="233"/>
</dbReference>
<dbReference type="STRING" id="284811.Q74ZB0"/>
<dbReference type="EnsemblFungi" id="AAS54779">
    <property type="protein sequence ID" value="AAS54779"/>
    <property type="gene ID" value="AGOS_AGR289C"/>
</dbReference>
<dbReference type="GeneID" id="4623257"/>
<dbReference type="KEGG" id="ago:AGOS_AGR289C"/>
<dbReference type="eggNOG" id="ENOG502RA7D">
    <property type="taxonomic scope" value="Eukaryota"/>
</dbReference>
<dbReference type="HOGENOM" id="CLU_597417_0_0_1"/>
<dbReference type="InParanoid" id="Q74ZB0"/>
<dbReference type="OMA" id="EPQVWCK"/>
<dbReference type="OrthoDB" id="419537at2759"/>
<dbReference type="Proteomes" id="UP000000591">
    <property type="component" value="Chromosome VII"/>
</dbReference>
<dbReference type="GO" id="GO:0030896">
    <property type="term" value="C:checkpoint clamp complex"/>
    <property type="evidence" value="ECO:0000318"/>
    <property type="project" value="GO_Central"/>
</dbReference>
<dbReference type="GO" id="GO:0000781">
    <property type="term" value="C:chromosome, telomeric region"/>
    <property type="evidence" value="ECO:0007669"/>
    <property type="project" value="GOC"/>
</dbReference>
<dbReference type="GO" id="GO:0035861">
    <property type="term" value="C:site of double-strand break"/>
    <property type="evidence" value="ECO:0000318"/>
    <property type="project" value="GO_Central"/>
</dbReference>
<dbReference type="GO" id="GO:0003677">
    <property type="term" value="F:DNA binding"/>
    <property type="evidence" value="ECO:0007669"/>
    <property type="project" value="UniProtKB-KW"/>
</dbReference>
<dbReference type="GO" id="GO:0000724">
    <property type="term" value="P:double-strand break repair via homologous recombination"/>
    <property type="evidence" value="ECO:0000318"/>
    <property type="project" value="GO_Central"/>
</dbReference>
<dbReference type="GO" id="GO:0044778">
    <property type="term" value="P:meiotic DNA integrity checkpoint signaling"/>
    <property type="evidence" value="ECO:0000318"/>
    <property type="project" value="GO_Central"/>
</dbReference>
<dbReference type="GO" id="GO:0033314">
    <property type="term" value="P:mitotic DNA replication checkpoint signaling"/>
    <property type="evidence" value="ECO:0000318"/>
    <property type="project" value="GO_Central"/>
</dbReference>
<dbReference type="GO" id="GO:0031573">
    <property type="term" value="P:mitotic intra-S DNA damage checkpoint signaling"/>
    <property type="evidence" value="ECO:0000318"/>
    <property type="project" value="GO_Central"/>
</dbReference>
<dbReference type="GO" id="GO:0006289">
    <property type="term" value="P:nucleotide-excision repair"/>
    <property type="evidence" value="ECO:0000318"/>
    <property type="project" value="GO_Central"/>
</dbReference>
<dbReference type="GO" id="GO:0031509">
    <property type="term" value="P:subtelomeric heterochromatin formation"/>
    <property type="evidence" value="ECO:0007669"/>
    <property type="project" value="EnsemblFungi"/>
</dbReference>
<dbReference type="GO" id="GO:0000723">
    <property type="term" value="P:telomere maintenance"/>
    <property type="evidence" value="ECO:0000318"/>
    <property type="project" value="GO_Central"/>
</dbReference>
<dbReference type="GO" id="GO:0000722">
    <property type="term" value="P:telomere maintenance via recombination"/>
    <property type="evidence" value="ECO:0007669"/>
    <property type="project" value="EnsemblFungi"/>
</dbReference>
<dbReference type="Gene3D" id="3.70.10.10">
    <property type="match status" value="1"/>
</dbReference>
<dbReference type="InterPro" id="IPR007150">
    <property type="entry name" value="Hus1/Mec3"/>
</dbReference>
<dbReference type="PANTHER" id="PTHR12900:SF0">
    <property type="entry name" value="CHECKPOINT PROTEIN"/>
    <property type="match status" value="1"/>
</dbReference>
<dbReference type="PANTHER" id="PTHR12900">
    <property type="entry name" value="MITOTIC AND DNA DAMAGE CHECKPOINT PROTEIN HUS1"/>
    <property type="match status" value="1"/>
</dbReference>
<dbReference type="Pfam" id="PF04005">
    <property type="entry name" value="Hus1"/>
    <property type="match status" value="1"/>
</dbReference>
<sequence>MKLKLVIDSDSDDYRLFKTTISTVAQLRKTAVLRFTTDRLIVVSTPKTAASGAILSGDQGQLWCTIPRDIFTLYNVASIREQNAIAMECQCDSLVNVLRRYERCNHGPLTIKLQSTPEWNQVHTGIQQGEENKPMGNPICALSCAFTEHLGYEDSGKEVSHVFKVGVRLLYKSQDARIVEPMVNYTKLLMFQLPPVNGEYGSKFTSFVKRLDRYATLNHLMIYGDRNSDRSDEGRLRLLVQELDWKLDVQWRGPLEMIVQDDQPSAVPASEPGLVGNVRHLNAGTSMQIEDSEMDIEATDIGNVSTSRPSTSVSPQEQTSQVFIKAKDWKVCSKLYDSFEEVVLAISHDESCVLHCSLDRGTVDEHSTKSKERGQIIYYMARSKPL</sequence>
<proteinExistence type="inferred from homology"/>